<evidence type="ECO:0000305" key="1"/>
<gene>
    <name type="primary">rpmH</name>
    <name type="synonym">rimA</name>
    <name type="synonym">ssaF</name>
    <name type="ordered locus">Z5194</name>
    <name type="ordered locus">ECs4638</name>
</gene>
<comment type="similarity">
    <text evidence="1">Belongs to the bacterial ribosomal protein bL34 family.</text>
</comment>
<organism>
    <name type="scientific">Escherichia coli O157:H7</name>
    <dbReference type="NCBI Taxonomy" id="83334"/>
    <lineage>
        <taxon>Bacteria</taxon>
        <taxon>Pseudomonadati</taxon>
        <taxon>Pseudomonadota</taxon>
        <taxon>Gammaproteobacteria</taxon>
        <taxon>Enterobacterales</taxon>
        <taxon>Enterobacteriaceae</taxon>
        <taxon>Escherichia</taxon>
    </lineage>
</organism>
<reference key="1">
    <citation type="journal article" date="2001" name="Nature">
        <title>Genome sequence of enterohaemorrhagic Escherichia coli O157:H7.</title>
        <authorList>
            <person name="Perna N.T."/>
            <person name="Plunkett G. III"/>
            <person name="Burland V."/>
            <person name="Mau B."/>
            <person name="Glasner J.D."/>
            <person name="Rose D.J."/>
            <person name="Mayhew G.F."/>
            <person name="Evans P.S."/>
            <person name="Gregor J."/>
            <person name="Kirkpatrick H.A."/>
            <person name="Posfai G."/>
            <person name="Hackett J."/>
            <person name="Klink S."/>
            <person name="Boutin A."/>
            <person name="Shao Y."/>
            <person name="Miller L."/>
            <person name="Grotbeck E.J."/>
            <person name="Davis N.W."/>
            <person name="Lim A."/>
            <person name="Dimalanta E.T."/>
            <person name="Potamousis K."/>
            <person name="Apodaca J."/>
            <person name="Anantharaman T.S."/>
            <person name="Lin J."/>
            <person name="Yen G."/>
            <person name="Schwartz D.C."/>
            <person name="Welch R.A."/>
            <person name="Blattner F.R."/>
        </authorList>
    </citation>
    <scope>NUCLEOTIDE SEQUENCE [LARGE SCALE GENOMIC DNA]</scope>
    <source>
        <strain>O157:H7 / EDL933 / ATCC 700927 / EHEC</strain>
    </source>
</reference>
<reference key="2">
    <citation type="journal article" date="2001" name="DNA Res.">
        <title>Complete genome sequence of enterohemorrhagic Escherichia coli O157:H7 and genomic comparison with a laboratory strain K-12.</title>
        <authorList>
            <person name="Hayashi T."/>
            <person name="Makino K."/>
            <person name="Ohnishi M."/>
            <person name="Kurokawa K."/>
            <person name="Ishii K."/>
            <person name="Yokoyama K."/>
            <person name="Han C.-G."/>
            <person name="Ohtsubo E."/>
            <person name="Nakayama K."/>
            <person name="Murata T."/>
            <person name="Tanaka M."/>
            <person name="Tobe T."/>
            <person name="Iida T."/>
            <person name="Takami H."/>
            <person name="Honda T."/>
            <person name="Sasakawa C."/>
            <person name="Ogasawara N."/>
            <person name="Yasunaga T."/>
            <person name="Kuhara S."/>
            <person name="Shiba T."/>
            <person name="Hattori M."/>
            <person name="Shinagawa H."/>
        </authorList>
    </citation>
    <scope>NUCLEOTIDE SEQUENCE [LARGE SCALE GENOMIC DNA]</scope>
    <source>
        <strain>O157:H7 / Sakai / RIMD 0509952 / EHEC</strain>
    </source>
</reference>
<proteinExistence type="inferred from homology"/>
<protein>
    <recommendedName>
        <fullName evidence="1">Large ribosomal subunit protein bL34</fullName>
    </recommendedName>
    <alternativeName>
        <fullName>50S ribosomal protein L34</fullName>
    </alternativeName>
</protein>
<accession>P0A7P7</accession>
<accession>P02437</accession>
<dbReference type="EMBL" id="AE005174">
    <property type="protein sequence ID" value="AAG58900.1"/>
    <property type="molecule type" value="Genomic_DNA"/>
</dbReference>
<dbReference type="EMBL" id="BA000007">
    <property type="protein sequence ID" value="BAB38061.1"/>
    <property type="molecule type" value="Genomic_DNA"/>
</dbReference>
<dbReference type="PIR" id="F91208">
    <property type="entry name" value="F91208"/>
</dbReference>
<dbReference type="PIR" id="H86054">
    <property type="entry name" value="H86054"/>
</dbReference>
<dbReference type="RefSeq" id="NP_312665.1">
    <property type="nucleotide sequence ID" value="NC_002695.1"/>
</dbReference>
<dbReference type="RefSeq" id="WP_000831330.1">
    <property type="nucleotide sequence ID" value="NZ_VOAI01000011.1"/>
</dbReference>
<dbReference type="SMR" id="P0A7P7"/>
<dbReference type="STRING" id="155864.Z5194"/>
<dbReference type="GeneID" id="915396"/>
<dbReference type="GeneID" id="98190980"/>
<dbReference type="KEGG" id="ece:Z5194"/>
<dbReference type="KEGG" id="ecs:ECs_4638"/>
<dbReference type="PATRIC" id="fig|386585.9.peg.4848"/>
<dbReference type="eggNOG" id="COG0230">
    <property type="taxonomic scope" value="Bacteria"/>
</dbReference>
<dbReference type="HOGENOM" id="CLU_129938_2_1_6"/>
<dbReference type="Proteomes" id="UP000000558">
    <property type="component" value="Chromosome"/>
</dbReference>
<dbReference type="Proteomes" id="UP000002519">
    <property type="component" value="Chromosome"/>
</dbReference>
<dbReference type="GO" id="GO:1990904">
    <property type="term" value="C:ribonucleoprotein complex"/>
    <property type="evidence" value="ECO:0007669"/>
    <property type="project" value="UniProtKB-KW"/>
</dbReference>
<dbReference type="GO" id="GO:0005840">
    <property type="term" value="C:ribosome"/>
    <property type="evidence" value="ECO:0007669"/>
    <property type="project" value="UniProtKB-KW"/>
</dbReference>
<dbReference type="GO" id="GO:0003735">
    <property type="term" value="F:structural constituent of ribosome"/>
    <property type="evidence" value="ECO:0007669"/>
    <property type="project" value="InterPro"/>
</dbReference>
<dbReference type="GO" id="GO:0006412">
    <property type="term" value="P:translation"/>
    <property type="evidence" value="ECO:0007669"/>
    <property type="project" value="UniProtKB-UniRule"/>
</dbReference>
<dbReference type="FunFam" id="1.10.287.3980:FF:000001">
    <property type="entry name" value="Mitochondrial ribosomal protein L34"/>
    <property type="match status" value="1"/>
</dbReference>
<dbReference type="Gene3D" id="1.10.287.3980">
    <property type="match status" value="1"/>
</dbReference>
<dbReference type="HAMAP" id="MF_00391">
    <property type="entry name" value="Ribosomal_bL34"/>
    <property type="match status" value="1"/>
</dbReference>
<dbReference type="InterPro" id="IPR000271">
    <property type="entry name" value="Ribosomal_bL34"/>
</dbReference>
<dbReference type="InterPro" id="IPR020939">
    <property type="entry name" value="Ribosomal_bL34_CS"/>
</dbReference>
<dbReference type="NCBIfam" id="TIGR01030">
    <property type="entry name" value="rpmH_bact"/>
    <property type="match status" value="1"/>
</dbReference>
<dbReference type="PANTHER" id="PTHR14503:SF4">
    <property type="entry name" value="LARGE RIBOSOMAL SUBUNIT PROTEIN BL34M"/>
    <property type="match status" value="1"/>
</dbReference>
<dbReference type="PANTHER" id="PTHR14503">
    <property type="entry name" value="MITOCHONDRIAL RIBOSOMAL PROTEIN 34 FAMILY MEMBER"/>
    <property type="match status" value="1"/>
</dbReference>
<dbReference type="Pfam" id="PF00468">
    <property type="entry name" value="Ribosomal_L34"/>
    <property type="match status" value="1"/>
</dbReference>
<dbReference type="PROSITE" id="PS00784">
    <property type="entry name" value="RIBOSOMAL_L34"/>
    <property type="match status" value="1"/>
</dbReference>
<name>RL34_ECO57</name>
<sequence length="46" mass="5380">MKRTFQPSVLKRNRSHGFRARMATKNGRQVLARRRAKGRARLTVSK</sequence>
<feature type="chain" id="PRO_0000187379" description="Large ribosomal subunit protein bL34">
    <location>
        <begin position="1"/>
        <end position="46"/>
    </location>
</feature>
<keyword id="KW-1185">Reference proteome</keyword>
<keyword id="KW-0687">Ribonucleoprotein</keyword>
<keyword id="KW-0689">Ribosomal protein</keyword>